<dbReference type="EMBL" id="AP006627">
    <property type="protein sequence ID" value="BAD64774.1"/>
    <property type="molecule type" value="Genomic_DNA"/>
</dbReference>
<dbReference type="RefSeq" id="WP_011247082.1">
    <property type="nucleotide sequence ID" value="NC_006582.1"/>
</dbReference>
<dbReference type="SMR" id="Q5WFT1"/>
<dbReference type="STRING" id="66692.ABC2239"/>
<dbReference type="KEGG" id="bcl:ABC2239"/>
<dbReference type="eggNOG" id="COG0233">
    <property type="taxonomic scope" value="Bacteria"/>
</dbReference>
<dbReference type="HOGENOM" id="CLU_073981_2_0_9"/>
<dbReference type="OrthoDB" id="9804006at2"/>
<dbReference type="Proteomes" id="UP000001168">
    <property type="component" value="Chromosome"/>
</dbReference>
<dbReference type="GO" id="GO:0005737">
    <property type="term" value="C:cytoplasm"/>
    <property type="evidence" value="ECO:0007669"/>
    <property type="project" value="UniProtKB-SubCell"/>
</dbReference>
<dbReference type="GO" id="GO:0043023">
    <property type="term" value="F:ribosomal large subunit binding"/>
    <property type="evidence" value="ECO:0007669"/>
    <property type="project" value="TreeGrafter"/>
</dbReference>
<dbReference type="GO" id="GO:0006415">
    <property type="term" value="P:translational termination"/>
    <property type="evidence" value="ECO:0007669"/>
    <property type="project" value="UniProtKB-UniRule"/>
</dbReference>
<dbReference type="CDD" id="cd00520">
    <property type="entry name" value="RRF"/>
    <property type="match status" value="1"/>
</dbReference>
<dbReference type="FunFam" id="1.10.132.20:FF:000001">
    <property type="entry name" value="Ribosome-recycling factor"/>
    <property type="match status" value="1"/>
</dbReference>
<dbReference type="FunFam" id="3.30.1360.40:FF:000001">
    <property type="entry name" value="Ribosome-recycling factor"/>
    <property type="match status" value="1"/>
</dbReference>
<dbReference type="Gene3D" id="3.30.1360.40">
    <property type="match status" value="1"/>
</dbReference>
<dbReference type="Gene3D" id="1.10.132.20">
    <property type="entry name" value="Ribosome-recycling factor"/>
    <property type="match status" value="1"/>
</dbReference>
<dbReference type="HAMAP" id="MF_00040">
    <property type="entry name" value="RRF"/>
    <property type="match status" value="1"/>
</dbReference>
<dbReference type="InterPro" id="IPR002661">
    <property type="entry name" value="Ribosome_recyc_fac"/>
</dbReference>
<dbReference type="InterPro" id="IPR023584">
    <property type="entry name" value="Ribosome_recyc_fac_dom"/>
</dbReference>
<dbReference type="InterPro" id="IPR036191">
    <property type="entry name" value="RRF_sf"/>
</dbReference>
<dbReference type="NCBIfam" id="TIGR00496">
    <property type="entry name" value="frr"/>
    <property type="match status" value="1"/>
</dbReference>
<dbReference type="PANTHER" id="PTHR20982:SF3">
    <property type="entry name" value="MITOCHONDRIAL RIBOSOME RECYCLING FACTOR PSEUDO 1"/>
    <property type="match status" value="1"/>
</dbReference>
<dbReference type="PANTHER" id="PTHR20982">
    <property type="entry name" value="RIBOSOME RECYCLING FACTOR"/>
    <property type="match status" value="1"/>
</dbReference>
<dbReference type="Pfam" id="PF01765">
    <property type="entry name" value="RRF"/>
    <property type="match status" value="1"/>
</dbReference>
<dbReference type="SUPFAM" id="SSF55194">
    <property type="entry name" value="Ribosome recycling factor, RRF"/>
    <property type="match status" value="1"/>
</dbReference>
<organism>
    <name type="scientific">Shouchella clausii (strain KSM-K16)</name>
    <name type="common">Alkalihalobacillus clausii</name>
    <dbReference type="NCBI Taxonomy" id="66692"/>
    <lineage>
        <taxon>Bacteria</taxon>
        <taxon>Bacillati</taxon>
        <taxon>Bacillota</taxon>
        <taxon>Bacilli</taxon>
        <taxon>Bacillales</taxon>
        <taxon>Bacillaceae</taxon>
        <taxon>Shouchella</taxon>
    </lineage>
</organism>
<protein>
    <recommendedName>
        <fullName evidence="1">Ribosome-recycling factor</fullName>
        <shortName evidence="1">RRF</shortName>
    </recommendedName>
    <alternativeName>
        <fullName evidence="1">Ribosome-releasing factor</fullName>
    </alternativeName>
</protein>
<keyword id="KW-0963">Cytoplasm</keyword>
<keyword id="KW-0648">Protein biosynthesis</keyword>
<keyword id="KW-1185">Reference proteome</keyword>
<evidence type="ECO:0000255" key="1">
    <source>
        <dbReference type="HAMAP-Rule" id="MF_00040"/>
    </source>
</evidence>
<proteinExistence type="inferred from homology"/>
<gene>
    <name evidence="1" type="primary">frr</name>
    <name type="ordered locus">ABC2239</name>
</gene>
<name>RRF_SHOC1</name>
<sequence>MTKEIKADAKTRMDKAIDVLSRELAKLRAGRANPALLDRVTVEYYGAQTPLNQLASVTVPEARLLLITPYDKTAVASIEKAILKSDLGLTPSNDGQVIRIAIPPLTEERRKDLVRLVSKTAEESKVAVRNIRRDANDELKKLQKDGEMTEDELRSATDDIQKLTDTYVAKIDEKAKQKEQEIIEV</sequence>
<feature type="chain" id="PRO_0000167411" description="Ribosome-recycling factor">
    <location>
        <begin position="1"/>
        <end position="185"/>
    </location>
</feature>
<comment type="function">
    <text evidence="1">Responsible for the release of ribosomes from messenger RNA at the termination of protein biosynthesis. May increase the efficiency of translation by recycling ribosomes from one round of translation to another.</text>
</comment>
<comment type="subcellular location">
    <subcellularLocation>
        <location evidence="1">Cytoplasm</location>
    </subcellularLocation>
</comment>
<comment type="similarity">
    <text evidence="1">Belongs to the RRF family.</text>
</comment>
<accession>Q5WFT1</accession>
<reference key="1">
    <citation type="submission" date="2003-10" db="EMBL/GenBank/DDBJ databases">
        <title>The complete genome sequence of the alkaliphilic Bacillus clausii KSM-K16.</title>
        <authorList>
            <person name="Takaki Y."/>
            <person name="Kageyama Y."/>
            <person name="Shimamura S."/>
            <person name="Suzuki H."/>
            <person name="Nishi S."/>
            <person name="Hatada Y."/>
            <person name="Kawai S."/>
            <person name="Ito S."/>
            <person name="Horikoshi K."/>
        </authorList>
    </citation>
    <scope>NUCLEOTIDE SEQUENCE [LARGE SCALE GENOMIC DNA]</scope>
    <source>
        <strain>KSM-K16</strain>
    </source>
</reference>